<sequence>MSTYPVTLPTKEERHKLFGSVPPIKGTKPTEKDKMIDLQNTPKNFLFALDAVGISNVKHPVVIQDGETTQATIATFELSTSLVQDRKGINMSRLTEQLDQYHNEGWVVTNESLIQFARELAERMEQSEGQLTIRYPWFFTRKAPATGLSGLMNAEVWQTVSVNTETNEATLSVGLTINVTTLCPCSKEISEYSAHNQRGYVTMEASLRDEADDFNWKQELLDAAESNASAPLHPVLKRPDEKRVTEMAYENPRFVEDMVRLIAADLYEMDPIASFFVECRNEETIHQHDAIARITFDKDAQ</sequence>
<protein>
    <recommendedName>
        <fullName evidence="1">GTP cyclohydrolase FolE2</fullName>
        <ecNumber evidence="1">3.5.4.16</ecNumber>
    </recommendedName>
</protein>
<proteinExistence type="inferred from homology"/>
<reference key="1">
    <citation type="submission" date="2008-04" db="EMBL/GenBank/DDBJ databases">
        <title>Complete sequence of chromosome of Exiguobacterium sibiricum 255-15.</title>
        <authorList>
            <consortium name="US DOE Joint Genome Institute"/>
            <person name="Copeland A."/>
            <person name="Lucas S."/>
            <person name="Lapidus A."/>
            <person name="Glavina del Rio T."/>
            <person name="Dalin E."/>
            <person name="Tice H."/>
            <person name="Bruce D."/>
            <person name="Goodwin L."/>
            <person name="Pitluck S."/>
            <person name="Kiss H."/>
            <person name="Chertkov O."/>
            <person name="Monk C."/>
            <person name="Brettin T."/>
            <person name="Detter J.C."/>
            <person name="Han C."/>
            <person name="Kuske C.R."/>
            <person name="Schmutz J."/>
            <person name="Larimer F."/>
            <person name="Land M."/>
            <person name="Hauser L."/>
            <person name="Kyrpides N."/>
            <person name="Mikhailova N."/>
            <person name="Vishnivetskaya T."/>
            <person name="Rodrigues D.F."/>
            <person name="Gilichinsky D."/>
            <person name="Tiedje J."/>
            <person name="Richardson P."/>
        </authorList>
    </citation>
    <scope>NUCLEOTIDE SEQUENCE [LARGE SCALE GENOMIC DNA]</scope>
    <source>
        <strain>DSM 17290 / CCUG 55495 / CIP 109462 / JCM 13490 / 255-15</strain>
    </source>
</reference>
<accession>B1YHT1</accession>
<name>GCH4_EXIS2</name>
<evidence type="ECO:0000255" key="1">
    <source>
        <dbReference type="HAMAP-Rule" id="MF_01527"/>
    </source>
</evidence>
<comment type="function">
    <text evidence="1">Converts GTP to 7,8-dihydroneopterin triphosphate.</text>
</comment>
<comment type="catalytic activity">
    <reaction evidence="1">
        <text>GTP + H2O = 7,8-dihydroneopterin 3'-triphosphate + formate + H(+)</text>
        <dbReference type="Rhea" id="RHEA:17473"/>
        <dbReference type="ChEBI" id="CHEBI:15377"/>
        <dbReference type="ChEBI" id="CHEBI:15378"/>
        <dbReference type="ChEBI" id="CHEBI:15740"/>
        <dbReference type="ChEBI" id="CHEBI:37565"/>
        <dbReference type="ChEBI" id="CHEBI:58462"/>
        <dbReference type="EC" id="3.5.4.16"/>
    </reaction>
</comment>
<comment type="pathway">
    <text evidence="1">Cofactor biosynthesis; 7,8-dihydroneopterin triphosphate biosynthesis; 7,8-dihydroneopterin triphosphate from GTP: step 1/1.</text>
</comment>
<comment type="similarity">
    <text evidence="1">Belongs to the GTP cyclohydrolase IV family.</text>
</comment>
<gene>
    <name evidence="1" type="primary">folE2</name>
    <name type="ordered locus">Exig_0229</name>
</gene>
<dbReference type="EC" id="3.5.4.16" evidence="1"/>
<dbReference type="EMBL" id="CP001022">
    <property type="protein sequence ID" value="ACB59715.1"/>
    <property type="molecule type" value="Genomic_DNA"/>
</dbReference>
<dbReference type="RefSeq" id="WP_012369140.1">
    <property type="nucleotide sequence ID" value="NC_010556.1"/>
</dbReference>
<dbReference type="SMR" id="B1YHT1"/>
<dbReference type="STRING" id="262543.Exig_0229"/>
<dbReference type="KEGG" id="esi:Exig_0229"/>
<dbReference type="eggNOG" id="COG1469">
    <property type="taxonomic scope" value="Bacteria"/>
</dbReference>
<dbReference type="HOGENOM" id="CLU_062816_1_1_9"/>
<dbReference type="OrthoDB" id="9774824at2"/>
<dbReference type="UniPathway" id="UPA00848">
    <property type="reaction ID" value="UER00151"/>
</dbReference>
<dbReference type="Proteomes" id="UP000001681">
    <property type="component" value="Chromosome"/>
</dbReference>
<dbReference type="GO" id="GO:0003934">
    <property type="term" value="F:GTP cyclohydrolase I activity"/>
    <property type="evidence" value="ECO:0007669"/>
    <property type="project" value="UniProtKB-UniRule"/>
</dbReference>
<dbReference type="GO" id="GO:0046654">
    <property type="term" value="P:tetrahydrofolate biosynthetic process"/>
    <property type="evidence" value="ECO:0007669"/>
    <property type="project" value="UniProtKB-UniRule"/>
</dbReference>
<dbReference type="Gene3D" id="3.10.270.10">
    <property type="entry name" value="Urate Oxidase"/>
    <property type="match status" value="1"/>
</dbReference>
<dbReference type="HAMAP" id="MF_01527_B">
    <property type="entry name" value="GTP_cyclohydrol_B"/>
    <property type="match status" value="1"/>
</dbReference>
<dbReference type="InterPro" id="IPR022838">
    <property type="entry name" value="GTP_cyclohydrolase_FolE2"/>
</dbReference>
<dbReference type="InterPro" id="IPR003801">
    <property type="entry name" value="GTP_cyclohydrolase_FolE2/MptA"/>
</dbReference>
<dbReference type="NCBIfam" id="NF010200">
    <property type="entry name" value="PRK13674.1-1"/>
    <property type="match status" value="1"/>
</dbReference>
<dbReference type="PANTHER" id="PTHR36445">
    <property type="entry name" value="GTP CYCLOHYDROLASE MPTA"/>
    <property type="match status" value="1"/>
</dbReference>
<dbReference type="PANTHER" id="PTHR36445:SF1">
    <property type="entry name" value="GTP CYCLOHYDROLASE MPTA"/>
    <property type="match status" value="1"/>
</dbReference>
<dbReference type="Pfam" id="PF02649">
    <property type="entry name" value="GCHY-1"/>
    <property type="match status" value="1"/>
</dbReference>
<organism>
    <name type="scientific">Exiguobacterium sibiricum (strain DSM 17290 / CCUG 55495 / CIP 109462 / JCM 13490 / 255-15)</name>
    <dbReference type="NCBI Taxonomy" id="262543"/>
    <lineage>
        <taxon>Bacteria</taxon>
        <taxon>Bacillati</taxon>
        <taxon>Bacillota</taxon>
        <taxon>Bacilli</taxon>
        <taxon>Bacillales</taxon>
        <taxon>Bacillales Family XII. Incertae Sedis</taxon>
        <taxon>Exiguobacterium</taxon>
    </lineage>
</organism>
<keyword id="KW-0378">Hydrolase</keyword>
<keyword id="KW-1185">Reference proteome</keyword>
<feature type="chain" id="PRO_0000372028" description="GTP cyclohydrolase FolE2">
    <location>
        <begin position="1"/>
        <end position="301"/>
    </location>
</feature>
<feature type="site" description="May be catalytically important" evidence="1">
    <location>
        <position position="183"/>
    </location>
</feature>